<dbReference type="EC" id="6.3.2.6" evidence="1"/>
<dbReference type="EMBL" id="AE006468">
    <property type="protein sequence ID" value="AAL21381.1"/>
    <property type="molecule type" value="Genomic_DNA"/>
</dbReference>
<dbReference type="RefSeq" id="NP_461422.1">
    <property type="nucleotide sequence ID" value="NC_003197.2"/>
</dbReference>
<dbReference type="RefSeq" id="WP_001171630.1">
    <property type="nucleotide sequence ID" value="NC_003197.2"/>
</dbReference>
<dbReference type="SMR" id="P65889"/>
<dbReference type="STRING" id="99287.STM2487"/>
<dbReference type="PaxDb" id="99287-STM2487"/>
<dbReference type="GeneID" id="1254009"/>
<dbReference type="KEGG" id="stm:STM2487"/>
<dbReference type="PATRIC" id="fig|99287.12.peg.2625"/>
<dbReference type="HOGENOM" id="CLU_061495_2_1_6"/>
<dbReference type="OMA" id="EFCYKND"/>
<dbReference type="PhylomeDB" id="P65889"/>
<dbReference type="BioCyc" id="SENT99287:STM2487-MONOMER"/>
<dbReference type="UniPathway" id="UPA00074">
    <property type="reaction ID" value="UER00131"/>
</dbReference>
<dbReference type="Proteomes" id="UP000001014">
    <property type="component" value="Chromosome"/>
</dbReference>
<dbReference type="GO" id="GO:0005829">
    <property type="term" value="C:cytosol"/>
    <property type="evidence" value="ECO:0000318"/>
    <property type="project" value="GO_Central"/>
</dbReference>
<dbReference type="GO" id="GO:0005524">
    <property type="term" value="F:ATP binding"/>
    <property type="evidence" value="ECO:0007669"/>
    <property type="project" value="UniProtKB-KW"/>
</dbReference>
<dbReference type="GO" id="GO:0004639">
    <property type="term" value="F:phosphoribosylaminoimidazolesuccinocarboxamide synthase activity"/>
    <property type="evidence" value="ECO:0000318"/>
    <property type="project" value="GO_Central"/>
</dbReference>
<dbReference type="GO" id="GO:0006189">
    <property type="term" value="P:'de novo' IMP biosynthetic process"/>
    <property type="evidence" value="ECO:0007669"/>
    <property type="project" value="UniProtKB-UniRule"/>
</dbReference>
<dbReference type="GO" id="GO:0009236">
    <property type="term" value="P:cobalamin biosynthetic process"/>
    <property type="evidence" value="ECO:0007669"/>
    <property type="project" value="InterPro"/>
</dbReference>
<dbReference type="CDD" id="cd01415">
    <property type="entry name" value="SAICAR_synt_PurC"/>
    <property type="match status" value="1"/>
</dbReference>
<dbReference type="FunFam" id="3.30.200.20:FF:000086">
    <property type="entry name" value="Phosphoribosylaminoimidazole-succinocarboxamide synthase"/>
    <property type="match status" value="1"/>
</dbReference>
<dbReference type="FunFam" id="3.30.470.20:FF:000006">
    <property type="entry name" value="Phosphoribosylaminoimidazole-succinocarboxamide synthase"/>
    <property type="match status" value="1"/>
</dbReference>
<dbReference type="Gene3D" id="3.30.470.20">
    <property type="entry name" value="ATP-grasp fold, B domain"/>
    <property type="match status" value="1"/>
</dbReference>
<dbReference type="Gene3D" id="3.30.200.20">
    <property type="entry name" value="Phosphorylase Kinase, domain 1"/>
    <property type="match status" value="1"/>
</dbReference>
<dbReference type="HAMAP" id="MF_00137">
    <property type="entry name" value="SAICAR_synth"/>
    <property type="match status" value="1"/>
</dbReference>
<dbReference type="InterPro" id="IPR028923">
    <property type="entry name" value="SAICAR_synt/ADE2_N"/>
</dbReference>
<dbReference type="InterPro" id="IPR033934">
    <property type="entry name" value="SAICAR_synt_PurC"/>
</dbReference>
<dbReference type="InterPro" id="IPR001636">
    <property type="entry name" value="SAICAR_synth"/>
</dbReference>
<dbReference type="InterPro" id="IPR050089">
    <property type="entry name" value="SAICAR_synthetase"/>
</dbReference>
<dbReference type="InterPro" id="IPR018236">
    <property type="entry name" value="SAICAR_synthetase_CS"/>
</dbReference>
<dbReference type="NCBIfam" id="TIGR00081">
    <property type="entry name" value="purC"/>
    <property type="match status" value="1"/>
</dbReference>
<dbReference type="PANTHER" id="PTHR43599">
    <property type="entry name" value="MULTIFUNCTIONAL PROTEIN ADE2"/>
    <property type="match status" value="1"/>
</dbReference>
<dbReference type="PANTHER" id="PTHR43599:SF3">
    <property type="entry name" value="SI:DKEY-6E2.2"/>
    <property type="match status" value="1"/>
</dbReference>
<dbReference type="Pfam" id="PF01259">
    <property type="entry name" value="SAICAR_synt"/>
    <property type="match status" value="1"/>
</dbReference>
<dbReference type="SUPFAM" id="SSF56104">
    <property type="entry name" value="SAICAR synthase-like"/>
    <property type="match status" value="1"/>
</dbReference>
<dbReference type="PROSITE" id="PS01057">
    <property type="entry name" value="SAICAR_SYNTHETASE_1"/>
    <property type="match status" value="1"/>
</dbReference>
<dbReference type="PROSITE" id="PS01058">
    <property type="entry name" value="SAICAR_SYNTHETASE_2"/>
    <property type="match status" value="1"/>
</dbReference>
<feature type="chain" id="PRO_0000100866" description="Phosphoribosylaminoimidazole-succinocarboxamide synthase">
    <location>
        <begin position="1"/>
        <end position="237"/>
    </location>
</feature>
<accession>P65889</accession>
<accession>Q8XF69</accession>
<evidence type="ECO:0000255" key="1">
    <source>
        <dbReference type="HAMAP-Rule" id="MF_00137"/>
    </source>
</evidence>
<comment type="catalytic activity">
    <reaction evidence="1">
        <text>5-amino-1-(5-phospho-D-ribosyl)imidazole-4-carboxylate + L-aspartate + ATP = (2S)-2-[5-amino-1-(5-phospho-beta-D-ribosyl)imidazole-4-carboxamido]succinate + ADP + phosphate + 2 H(+)</text>
        <dbReference type="Rhea" id="RHEA:22628"/>
        <dbReference type="ChEBI" id="CHEBI:15378"/>
        <dbReference type="ChEBI" id="CHEBI:29991"/>
        <dbReference type="ChEBI" id="CHEBI:30616"/>
        <dbReference type="ChEBI" id="CHEBI:43474"/>
        <dbReference type="ChEBI" id="CHEBI:58443"/>
        <dbReference type="ChEBI" id="CHEBI:77657"/>
        <dbReference type="ChEBI" id="CHEBI:456216"/>
        <dbReference type="EC" id="6.3.2.6"/>
    </reaction>
</comment>
<comment type="pathway">
    <text evidence="1">Purine metabolism; IMP biosynthesis via de novo pathway; 5-amino-1-(5-phospho-D-ribosyl)imidazole-4-carboxamide from 5-amino-1-(5-phospho-D-ribosyl)imidazole-4-carboxylate: step 1/2.</text>
</comment>
<comment type="similarity">
    <text evidence="1">Belongs to the SAICAR synthetase family.</text>
</comment>
<proteinExistence type="inferred from homology"/>
<protein>
    <recommendedName>
        <fullName evidence="1">Phosphoribosylaminoimidazole-succinocarboxamide synthase</fullName>
        <ecNumber evidence="1">6.3.2.6</ecNumber>
    </recommendedName>
    <alternativeName>
        <fullName evidence="1">SAICAR synthetase</fullName>
    </alternativeName>
</protein>
<keyword id="KW-0067">ATP-binding</keyword>
<keyword id="KW-0436">Ligase</keyword>
<keyword id="KW-0547">Nucleotide-binding</keyword>
<keyword id="KW-0658">Purine biosynthesis</keyword>
<keyword id="KW-1185">Reference proteome</keyword>
<gene>
    <name evidence="1" type="primary">purC</name>
    <name type="ordered locus">STM2487</name>
</gene>
<organism>
    <name type="scientific">Salmonella typhimurium (strain LT2 / SGSC1412 / ATCC 700720)</name>
    <dbReference type="NCBI Taxonomy" id="99287"/>
    <lineage>
        <taxon>Bacteria</taxon>
        <taxon>Pseudomonadati</taxon>
        <taxon>Pseudomonadota</taxon>
        <taxon>Gammaproteobacteria</taxon>
        <taxon>Enterobacterales</taxon>
        <taxon>Enterobacteriaceae</taxon>
        <taxon>Salmonella</taxon>
    </lineage>
</organism>
<reference key="1">
    <citation type="journal article" date="2001" name="Nature">
        <title>Complete genome sequence of Salmonella enterica serovar Typhimurium LT2.</title>
        <authorList>
            <person name="McClelland M."/>
            <person name="Sanderson K.E."/>
            <person name="Spieth J."/>
            <person name="Clifton S.W."/>
            <person name="Latreille P."/>
            <person name="Courtney L."/>
            <person name="Porwollik S."/>
            <person name="Ali J."/>
            <person name="Dante M."/>
            <person name="Du F."/>
            <person name="Hou S."/>
            <person name="Layman D."/>
            <person name="Leonard S."/>
            <person name="Nguyen C."/>
            <person name="Scott K."/>
            <person name="Holmes A."/>
            <person name="Grewal N."/>
            <person name="Mulvaney E."/>
            <person name="Ryan E."/>
            <person name="Sun H."/>
            <person name="Florea L."/>
            <person name="Miller W."/>
            <person name="Stoneking T."/>
            <person name="Nhan M."/>
            <person name="Waterston R."/>
            <person name="Wilson R.K."/>
        </authorList>
    </citation>
    <scope>NUCLEOTIDE SEQUENCE [LARGE SCALE GENOMIC DNA]</scope>
    <source>
        <strain>LT2 / SGSC1412 / ATCC 700720</strain>
    </source>
</reference>
<name>PUR7_SALTY</name>
<sequence>MQKQAELYRGKAKTVYSTENPDLLVLEFRNDTSAGDGARIEQFDRKGMVNNKFNHFIMTKLAEAGIPTQMERLLSDTECLVKKLEMVPVECVVRNRAAGSLVKRLGVEEGMELNPPIFDLFLKNDALHDPMVNSSYCETFGWVSQENLARMKELTYKANDVLKKLFDDAGLILVDFKLEFGLYKGEVVLGDEFSPDGSRLWDKETLDKMDKDRFRQSLGGLIEAYEAVAHRLGVKLD</sequence>